<proteinExistence type="predicted"/>
<evidence type="ECO:0000255" key="1"/>
<evidence type="ECO:0000305" key="2"/>
<keyword id="KW-1003">Cell membrane</keyword>
<keyword id="KW-0472">Membrane</keyword>
<keyword id="KW-1185">Reference proteome</keyword>
<keyword id="KW-0812">Transmembrane</keyword>
<keyword id="KW-1133">Transmembrane helix</keyword>
<name>YOSE_BACSU</name>
<protein>
    <recommendedName>
        <fullName>SPbeta prophage-derived uncharacterized membrane protein YosE</fullName>
    </recommendedName>
</protein>
<sequence>MNKDTKDIWSGFFMGSGSLIVVGLLIFVEALTMSLIVYYGLNHVLNPLLIDTYNIQNVHVTLPHAFVIGVLLNVFVKGVKRSDQEKDENIFKKAGKSLFHSTFALIVLYVSTLFI</sequence>
<feature type="chain" id="PRO_0000370263" description="SPbeta prophage-derived uncharacterized membrane protein YosE">
    <location>
        <begin position="1"/>
        <end position="115"/>
    </location>
</feature>
<feature type="transmembrane region" description="Helical" evidence="1">
    <location>
        <begin position="20"/>
        <end position="42"/>
    </location>
</feature>
<feature type="transmembrane region" description="Helical" evidence="1">
    <location>
        <begin position="58"/>
        <end position="78"/>
    </location>
</feature>
<feature type="transmembrane region" description="Helical" evidence="1">
    <location>
        <begin position="95"/>
        <end position="115"/>
    </location>
</feature>
<organism>
    <name type="scientific">Bacillus subtilis (strain 168)</name>
    <dbReference type="NCBI Taxonomy" id="224308"/>
    <lineage>
        <taxon>Bacteria</taxon>
        <taxon>Bacillati</taxon>
        <taxon>Bacillota</taxon>
        <taxon>Bacilli</taxon>
        <taxon>Bacillales</taxon>
        <taxon>Bacillaceae</taxon>
        <taxon>Bacillus</taxon>
    </lineage>
</organism>
<dbReference type="EMBL" id="AL009126">
    <property type="protein sequence ID" value="CAB13907.1"/>
    <property type="molecule type" value="Genomic_DNA"/>
</dbReference>
<dbReference type="RefSeq" id="NP_389897.1">
    <property type="nucleotide sequence ID" value="NC_000964.3"/>
</dbReference>
<dbReference type="RefSeq" id="WP_004399279.1">
    <property type="nucleotide sequence ID" value="NZ_OZ025638.1"/>
</dbReference>
<dbReference type="FunCoup" id="O31884">
    <property type="interactions" value="76"/>
</dbReference>
<dbReference type="STRING" id="224308.BSU20150"/>
<dbReference type="PaxDb" id="224308-BSU20150"/>
<dbReference type="EnsemblBacteria" id="CAB13907">
    <property type="protein sequence ID" value="CAB13907"/>
    <property type="gene ID" value="BSU_20150"/>
</dbReference>
<dbReference type="GeneID" id="939572"/>
<dbReference type="KEGG" id="bsu:BSU20150"/>
<dbReference type="PATRIC" id="fig|224308.179.peg.2205"/>
<dbReference type="InParanoid" id="O31884"/>
<dbReference type="OrthoDB" id="2904735at2"/>
<dbReference type="BioCyc" id="BSUB:BSU20150-MONOMER"/>
<dbReference type="Proteomes" id="UP000001570">
    <property type="component" value="Chromosome"/>
</dbReference>
<dbReference type="GO" id="GO:0005886">
    <property type="term" value="C:plasma membrane"/>
    <property type="evidence" value="ECO:0007669"/>
    <property type="project" value="UniProtKB-SubCell"/>
</dbReference>
<gene>
    <name type="primary">yosE</name>
    <name type="ordered locus">BSU20150</name>
</gene>
<comment type="subcellular location">
    <subcellularLocation>
        <location evidence="2">Cell membrane</location>
        <topology evidence="2">Multi-pass membrane protein</topology>
    </subcellularLocation>
</comment>
<accession>O31884</accession>
<reference key="1">
    <citation type="journal article" date="1997" name="Nature">
        <title>The complete genome sequence of the Gram-positive bacterium Bacillus subtilis.</title>
        <authorList>
            <person name="Kunst F."/>
            <person name="Ogasawara N."/>
            <person name="Moszer I."/>
            <person name="Albertini A.M."/>
            <person name="Alloni G."/>
            <person name="Azevedo V."/>
            <person name="Bertero M.G."/>
            <person name="Bessieres P."/>
            <person name="Bolotin A."/>
            <person name="Borchert S."/>
            <person name="Borriss R."/>
            <person name="Boursier L."/>
            <person name="Brans A."/>
            <person name="Braun M."/>
            <person name="Brignell S.C."/>
            <person name="Bron S."/>
            <person name="Brouillet S."/>
            <person name="Bruschi C.V."/>
            <person name="Caldwell B."/>
            <person name="Capuano V."/>
            <person name="Carter N.M."/>
            <person name="Choi S.-K."/>
            <person name="Codani J.-J."/>
            <person name="Connerton I.F."/>
            <person name="Cummings N.J."/>
            <person name="Daniel R.A."/>
            <person name="Denizot F."/>
            <person name="Devine K.M."/>
            <person name="Duesterhoeft A."/>
            <person name="Ehrlich S.D."/>
            <person name="Emmerson P.T."/>
            <person name="Entian K.-D."/>
            <person name="Errington J."/>
            <person name="Fabret C."/>
            <person name="Ferrari E."/>
            <person name="Foulger D."/>
            <person name="Fritz C."/>
            <person name="Fujita M."/>
            <person name="Fujita Y."/>
            <person name="Fuma S."/>
            <person name="Galizzi A."/>
            <person name="Galleron N."/>
            <person name="Ghim S.-Y."/>
            <person name="Glaser P."/>
            <person name="Goffeau A."/>
            <person name="Golightly E.J."/>
            <person name="Grandi G."/>
            <person name="Guiseppi G."/>
            <person name="Guy B.J."/>
            <person name="Haga K."/>
            <person name="Haiech J."/>
            <person name="Harwood C.R."/>
            <person name="Henaut A."/>
            <person name="Hilbert H."/>
            <person name="Holsappel S."/>
            <person name="Hosono S."/>
            <person name="Hullo M.-F."/>
            <person name="Itaya M."/>
            <person name="Jones L.-M."/>
            <person name="Joris B."/>
            <person name="Karamata D."/>
            <person name="Kasahara Y."/>
            <person name="Klaerr-Blanchard M."/>
            <person name="Klein C."/>
            <person name="Kobayashi Y."/>
            <person name="Koetter P."/>
            <person name="Koningstein G."/>
            <person name="Krogh S."/>
            <person name="Kumano M."/>
            <person name="Kurita K."/>
            <person name="Lapidus A."/>
            <person name="Lardinois S."/>
            <person name="Lauber J."/>
            <person name="Lazarevic V."/>
            <person name="Lee S.-M."/>
            <person name="Levine A."/>
            <person name="Liu H."/>
            <person name="Masuda S."/>
            <person name="Mauel C."/>
            <person name="Medigue C."/>
            <person name="Medina N."/>
            <person name="Mellado R.P."/>
            <person name="Mizuno M."/>
            <person name="Moestl D."/>
            <person name="Nakai S."/>
            <person name="Noback M."/>
            <person name="Noone D."/>
            <person name="O'Reilly M."/>
            <person name="Ogawa K."/>
            <person name="Ogiwara A."/>
            <person name="Oudega B."/>
            <person name="Park S.-H."/>
            <person name="Parro V."/>
            <person name="Pohl T.M."/>
            <person name="Portetelle D."/>
            <person name="Porwollik S."/>
            <person name="Prescott A.M."/>
            <person name="Presecan E."/>
            <person name="Pujic P."/>
            <person name="Purnelle B."/>
            <person name="Rapoport G."/>
            <person name="Rey M."/>
            <person name="Reynolds S."/>
            <person name="Rieger M."/>
            <person name="Rivolta C."/>
            <person name="Rocha E."/>
            <person name="Roche B."/>
            <person name="Rose M."/>
            <person name="Sadaie Y."/>
            <person name="Sato T."/>
            <person name="Scanlan E."/>
            <person name="Schleich S."/>
            <person name="Schroeter R."/>
            <person name="Scoffone F."/>
            <person name="Sekiguchi J."/>
            <person name="Sekowska A."/>
            <person name="Seror S.J."/>
            <person name="Serror P."/>
            <person name="Shin B.-S."/>
            <person name="Soldo B."/>
            <person name="Sorokin A."/>
            <person name="Tacconi E."/>
            <person name="Takagi T."/>
            <person name="Takahashi H."/>
            <person name="Takemaru K."/>
            <person name="Takeuchi M."/>
            <person name="Tamakoshi A."/>
            <person name="Tanaka T."/>
            <person name="Terpstra P."/>
            <person name="Tognoni A."/>
            <person name="Tosato V."/>
            <person name="Uchiyama S."/>
            <person name="Vandenbol M."/>
            <person name="Vannier F."/>
            <person name="Vassarotti A."/>
            <person name="Viari A."/>
            <person name="Wambutt R."/>
            <person name="Wedler E."/>
            <person name="Wedler H."/>
            <person name="Weitzenegger T."/>
            <person name="Winters P."/>
            <person name="Wipat A."/>
            <person name="Yamamoto H."/>
            <person name="Yamane K."/>
            <person name="Yasumoto K."/>
            <person name="Yata K."/>
            <person name="Yoshida K."/>
            <person name="Yoshikawa H.-F."/>
            <person name="Zumstein E."/>
            <person name="Yoshikawa H."/>
            <person name="Danchin A."/>
        </authorList>
    </citation>
    <scope>NUCLEOTIDE SEQUENCE [LARGE SCALE GENOMIC DNA]</scope>
    <source>
        <strain>168</strain>
    </source>
</reference>